<reference key="1">
    <citation type="journal article" date="2003" name="Nat. Biotechnol.">
        <title>The genome sequence of the entomopathogenic bacterium Photorhabdus luminescens.</title>
        <authorList>
            <person name="Duchaud E."/>
            <person name="Rusniok C."/>
            <person name="Frangeul L."/>
            <person name="Buchrieser C."/>
            <person name="Givaudan A."/>
            <person name="Taourit S."/>
            <person name="Bocs S."/>
            <person name="Boursaux-Eude C."/>
            <person name="Chandler M."/>
            <person name="Charles J.-F."/>
            <person name="Dassa E."/>
            <person name="Derose R."/>
            <person name="Derzelle S."/>
            <person name="Freyssinet G."/>
            <person name="Gaudriault S."/>
            <person name="Medigue C."/>
            <person name="Lanois A."/>
            <person name="Powell K."/>
            <person name="Siguier P."/>
            <person name="Vincent R."/>
            <person name="Wingate V."/>
            <person name="Zouine M."/>
            <person name="Glaser P."/>
            <person name="Boemare N."/>
            <person name="Danchin A."/>
            <person name="Kunst F."/>
        </authorList>
    </citation>
    <scope>NUCLEOTIDE SEQUENCE [LARGE SCALE GENOMIC DNA]</scope>
    <source>
        <strain>DSM 15139 / CIP 105565 / TT01</strain>
    </source>
</reference>
<proteinExistence type="inferred from homology"/>
<comment type="function">
    <text evidence="1">Catalyzes the transfer of the diacylglyceryl group from phosphatidylglycerol to the sulfhydryl group of the N-terminal cysteine of a prolipoprotein, the first step in the formation of mature lipoproteins.</text>
</comment>
<comment type="catalytic activity">
    <reaction evidence="1">
        <text>L-cysteinyl-[prolipoprotein] + a 1,2-diacyl-sn-glycero-3-phospho-(1'-sn-glycerol) = an S-1,2-diacyl-sn-glyceryl-L-cysteinyl-[prolipoprotein] + sn-glycerol 1-phosphate + H(+)</text>
        <dbReference type="Rhea" id="RHEA:56712"/>
        <dbReference type="Rhea" id="RHEA-COMP:14679"/>
        <dbReference type="Rhea" id="RHEA-COMP:14680"/>
        <dbReference type="ChEBI" id="CHEBI:15378"/>
        <dbReference type="ChEBI" id="CHEBI:29950"/>
        <dbReference type="ChEBI" id="CHEBI:57685"/>
        <dbReference type="ChEBI" id="CHEBI:64716"/>
        <dbReference type="ChEBI" id="CHEBI:140658"/>
        <dbReference type="EC" id="2.5.1.145"/>
    </reaction>
</comment>
<comment type="pathway">
    <text evidence="1">Protein modification; lipoprotein biosynthesis (diacylglyceryl transfer).</text>
</comment>
<comment type="subcellular location">
    <subcellularLocation>
        <location evidence="1">Cell inner membrane</location>
        <topology evidence="1">Multi-pass membrane protein</topology>
    </subcellularLocation>
</comment>
<comment type="similarity">
    <text evidence="1">Belongs to the Lgt family.</text>
</comment>
<organism>
    <name type="scientific">Photorhabdus laumondii subsp. laumondii (strain DSM 15139 / CIP 105565 / TT01)</name>
    <name type="common">Photorhabdus luminescens subsp. laumondii</name>
    <dbReference type="NCBI Taxonomy" id="243265"/>
    <lineage>
        <taxon>Bacteria</taxon>
        <taxon>Pseudomonadati</taxon>
        <taxon>Pseudomonadota</taxon>
        <taxon>Gammaproteobacteria</taxon>
        <taxon>Enterobacterales</taxon>
        <taxon>Morganellaceae</taxon>
        <taxon>Photorhabdus</taxon>
    </lineage>
</organism>
<sequence length="291" mass="32682">MSNSYLAFPNIDPVIFSIGPIALHWYGFMYLVGFVFAMWLATRRAAKPNSGWTKNEVENLLYAGFAGVFVGGRLGYVLFYNFPAFLDNPLYLFKVWDGGMSFHGGLVGVICAMWWFGRRTKRHFLQVADFIAPLVPFGLGMGRIGNFINGELWGRVTLDTPWAMLFPSSRGEDIALAATDPSLLSVLEQYGVLPRHPSQLYEMALEGIVLFIILNLYIRKPRPMGSVSGLFLIGYGIFRVIVEFFRQPDAQLGLFDGISMGQILSIPMILAGILMMIWAYKHQGNKVQEVK</sequence>
<keyword id="KW-0997">Cell inner membrane</keyword>
<keyword id="KW-1003">Cell membrane</keyword>
<keyword id="KW-0472">Membrane</keyword>
<keyword id="KW-1185">Reference proteome</keyword>
<keyword id="KW-0808">Transferase</keyword>
<keyword id="KW-0812">Transmembrane</keyword>
<keyword id="KW-1133">Transmembrane helix</keyword>
<accession>Q7N8U5</accession>
<protein>
    <recommendedName>
        <fullName evidence="1">Phosphatidylglycerol--prolipoprotein diacylglyceryl transferase</fullName>
        <ecNumber evidence="1">2.5.1.145</ecNumber>
    </recommendedName>
</protein>
<evidence type="ECO:0000255" key="1">
    <source>
        <dbReference type="HAMAP-Rule" id="MF_01147"/>
    </source>
</evidence>
<gene>
    <name evidence="1" type="primary">lgt</name>
    <name type="ordered locus">plu0622</name>
</gene>
<name>LGT_PHOLL</name>
<dbReference type="EC" id="2.5.1.145" evidence="1"/>
<dbReference type="EMBL" id="BX571861">
    <property type="protein sequence ID" value="CAE12917.1"/>
    <property type="molecule type" value="Genomic_DNA"/>
</dbReference>
<dbReference type="RefSeq" id="WP_011144998.1">
    <property type="nucleotide sequence ID" value="NC_005126.1"/>
</dbReference>
<dbReference type="SMR" id="Q7N8U5"/>
<dbReference type="STRING" id="243265.plu0622"/>
<dbReference type="GeneID" id="48846908"/>
<dbReference type="KEGG" id="plu:plu0622"/>
<dbReference type="eggNOG" id="COG0682">
    <property type="taxonomic scope" value="Bacteria"/>
</dbReference>
<dbReference type="HOGENOM" id="CLU_013386_1_0_6"/>
<dbReference type="OrthoDB" id="871140at2"/>
<dbReference type="UniPathway" id="UPA00664"/>
<dbReference type="Proteomes" id="UP000002514">
    <property type="component" value="Chromosome"/>
</dbReference>
<dbReference type="GO" id="GO:0005886">
    <property type="term" value="C:plasma membrane"/>
    <property type="evidence" value="ECO:0007669"/>
    <property type="project" value="UniProtKB-SubCell"/>
</dbReference>
<dbReference type="GO" id="GO:0008961">
    <property type="term" value="F:phosphatidylglycerol-prolipoprotein diacylglyceryl transferase activity"/>
    <property type="evidence" value="ECO:0007669"/>
    <property type="project" value="UniProtKB-UniRule"/>
</dbReference>
<dbReference type="GO" id="GO:0042158">
    <property type="term" value="P:lipoprotein biosynthetic process"/>
    <property type="evidence" value="ECO:0007669"/>
    <property type="project" value="UniProtKB-UniRule"/>
</dbReference>
<dbReference type="HAMAP" id="MF_01147">
    <property type="entry name" value="Lgt"/>
    <property type="match status" value="1"/>
</dbReference>
<dbReference type="InterPro" id="IPR001640">
    <property type="entry name" value="Lgt"/>
</dbReference>
<dbReference type="NCBIfam" id="TIGR00544">
    <property type="entry name" value="lgt"/>
    <property type="match status" value="1"/>
</dbReference>
<dbReference type="PANTHER" id="PTHR30589:SF0">
    <property type="entry name" value="PHOSPHATIDYLGLYCEROL--PROLIPOPROTEIN DIACYLGLYCERYL TRANSFERASE"/>
    <property type="match status" value="1"/>
</dbReference>
<dbReference type="PANTHER" id="PTHR30589">
    <property type="entry name" value="PROLIPOPROTEIN DIACYLGLYCERYL TRANSFERASE"/>
    <property type="match status" value="1"/>
</dbReference>
<dbReference type="Pfam" id="PF01790">
    <property type="entry name" value="LGT"/>
    <property type="match status" value="1"/>
</dbReference>
<dbReference type="PROSITE" id="PS01311">
    <property type="entry name" value="LGT"/>
    <property type="match status" value="1"/>
</dbReference>
<feature type="chain" id="PRO_0000172647" description="Phosphatidylglycerol--prolipoprotein diacylglyceryl transferase">
    <location>
        <begin position="1"/>
        <end position="291"/>
    </location>
</feature>
<feature type="transmembrane region" description="Helical" evidence="1">
    <location>
        <begin position="21"/>
        <end position="41"/>
    </location>
</feature>
<feature type="transmembrane region" description="Helical" evidence="1">
    <location>
        <begin position="60"/>
        <end position="80"/>
    </location>
</feature>
<feature type="transmembrane region" description="Helical" evidence="1">
    <location>
        <begin position="96"/>
        <end position="116"/>
    </location>
</feature>
<feature type="transmembrane region" description="Helical" evidence="1">
    <location>
        <begin position="124"/>
        <end position="144"/>
    </location>
</feature>
<feature type="transmembrane region" description="Helical" evidence="1">
    <location>
        <begin position="198"/>
        <end position="218"/>
    </location>
</feature>
<feature type="transmembrane region" description="Helical" evidence="1">
    <location>
        <begin position="225"/>
        <end position="245"/>
    </location>
</feature>
<feature type="transmembrane region" description="Helical" evidence="1">
    <location>
        <begin position="258"/>
        <end position="278"/>
    </location>
</feature>
<feature type="binding site" evidence="1">
    <location>
        <position position="143"/>
    </location>
    <ligand>
        <name>a 1,2-diacyl-sn-glycero-3-phospho-(1'-sn-glycerol)</name>
        <dbReference type="ChEBI" id="CHEBI:64716"/>
    </ligand>
</feature>